<gene>
    <name evidence="1" type="primary">matK</name>
</gene>
<protein>
    <recommendedName>
        <fullName evidence="1">Maturase K</fullName>
    </recommendedName>
    <alternativeName>
        <fullName evidence="1">Intron maturase</fullName>
    </alternativeName>
</protein>
<dbReference type="EMBL" id="U61324">
    <property type="protein sequence ID" value="AAB93707.1"/>
    <property type="molecule type" value="Genomic_DNA"/>
</dbReference>
<dbReference type="EMBL" id="KR819665">
    <property type="protein sequence ID" value="ANA05070.1"/>
    <property type="molecule type" value="Genomic_DNA"/>
</dbReference>
<dbReference type="EMBL" id="KP297242">
    <property type="protein sequence ID" value="AJO26068.1"/>
    <property type="molecule type" value="Genomic_DNA"/>
</dbReference>
<dbReference type="EMBL" id="KP297245">
    <property type="protein sequence ID" value="AJO26317.1"/>
    <property type="molecule type" value="Genomic_DNA"/>
</dbReference>
<dbReference type="EMBL" id="KP297243">
    <property type="protein sequence ID" value="AJO26151.1"/>
    <property type="molecule type" value="Genomic_DNA"/>
</dbReference>
<dbReference type="RefSeq" id="YP_009127969.1">
    <property type="nucleotide sequence ID" value="NC_026690.1"/>
</dbReference>
<dbReference type="GeneID" id="23764034"/>
<dbReference type="GO" id="GO:0009507">
    <property type="term" value="C:chloroplast"/>
    <property type="evidence" value="ECO:0007669"/>
    <property type="project" value="UniProtKB-SubCell"/>
</dbReference>
<dbReference type="GO" id="GO:0003723">
    <property type="term" value="F:RNA binding"/>
    <property type="evidence" value="ECO:0007669"/>
    <property type="project" value="UniProtKB-KW"/>
</dbReference>
<dbReference type="GO" id="GO:0006397">
    <property type="term" value="P:mRNA processing"/>
    <property type="evidence" value="ECO:0007669"/>
    <property type="project" value="UniProtKB-KW"/>
</dbReference>
<dbReference type="GO" id="GO:0008380">
    <property type="term" value="P:RNA splicing"/>
    <property type="evidence" value="ECO:0007669"/>
    <property type="project" value="UniProtKB-UniRule"/>
</dbReference>
<dbReference type="GO" id="GO:0008033">
    <property type="term" value="P:tRNA processing"/>
    <property type="evidence" value="ECO:0007669"/>
    <property type="project" value="UniProtKB-KW"/>
</dbReference>
<dbReference type="HAMAP" id="MF_01390">
    <property type="entry name" value="MatK"/>
    <property type="match status" value="1"/>
</dbReference>
<dbReference type="InterPro" id="IPR024937">
    <property type="entry name" value="Domain_X"/>
</dbReference>
<dbReference type="InterPro" id="IPR002866">
    <property type="entry name" value="Maturase_MatK"/>
</dbReference>
<dbReference type="InterPro" id="IPR024942">
    <property type="entry name" value="Maturase_MatK_N"/>
</dbReference>
<dbReference type="PANTHER" id="PTHR34811">
    <property type="entry name" value="MATURASE K"/>
    <property type="match status" value="1"/>
</dbReference>
<dbReference type="PANTHER" id="PTHR34811:SF1">
    <property type="entry name" value="MATURASE K"/>
    <property type="match status" value="1"/>
</dbReference>
<dbReference type="Pfam" id="PF01348">
    <property type="entry name" value="Intron_maturas2"/>
    <property type="match status" value="1"/>
</dbReference>
<dbReference type="Pfam" id="PF01824">
    <property type="entry name" value="MatK_N"/>
    <property type="match status" value="1"/>
</dbReference>
<accession>O47141</accession>
<accession>A0A0C5CHJ5</accession>
<accession>A0A166FA76</accession>
<comment type="function">
    <text evidence="1">Usually encoded in the trnK tRNA gene intron. Probably assists in splicing its own and other chloroplast group II introns.</text>
</comment>
<comment type="subcellular location">
    <subcellularLocation>
        <location>Plastid</location>
        <location>Chloroplast</location>
    </subcellularLocation>
</comment>
<comment type="similarity">
    <text evidence="1">Belongs to the intron maturase 2 family. MatK subfamily.</text>
</comment>
<name>MATK_ACTCH</name>
<feature type="chain" id="PRO_0000143207" description="Maturase K">
    <location>
        <begin position="1"/>
        <end position="504"/>
    </location>
</feature>
<feature type="sequence conflict" description="In Ref. 1; AAB93707." evidence="2" ref="1">
    <original>K</original>
    <variation>E</variation>
    <location>
        <position position="2"/>
    </location>
</feature>
<feature type="sequence conflict" description="In Ref. 1; AAB93707." evidence="2" ref="1">
    <original>P</original>
    <variation>T</variation>
    <location>
        <position position="21"/>
    </location>
</feature>
<feature type="sequence conflict" description="In Ref. 2; ANA05070." evidence="2" ref="2">
    <original>T</original>
    <variation>I</variation>
    <location>
        <position position="119"/>
    </location>
</feature>
<feature type="sequence conflict" description="In Ref. 1; AAB93707." evidence="2" ref="1">
    <original>D</original>
    <variation>A</variation>
    <location>
        <position position="137"/>
    </location>
</feature>
<feature type="sequence conflict" description="In Ref. 1; AAB93707." evidence="2" ref="1">
    <original>N</original>
    <variation>K</variation>
    <location>
        <position position="281"/>
    </location>
</feature>
<geneLocation type="chloroplast"/>
<evidence type="ECO:0000255" key="1">
    <source>
        <dbReference type="HAMAP-Rule" id="MF_01390"/>
    </source>
</evidence>
<evidence type="ECO:0000305" key="2"/>
<organism>
    <name type="scientific">Actinidia chinensis</name>
    <name type="common">Kiwi</name>
    <name type="synonym">Yangtao</name>
    <dbReference type="NCBI Taxonomy" id="3625"/>
    <lineage>
        <taxon>Eukaryota</taxon>
        <taxon>Viridiplantae</taxon>
        <taxon>Streptophyta</taxon>
        <taxon>Embryophyta</taxon>
        <taxon>Tracheophyta</taxon>
        <taxon>Spermatophyta</taxon>
        <taxon>Magnoliopsida</taxon>
        <taxon>eudicotyledons</taxon>
        <taxon>Gunneridae</taxon>
        <taxon>Pentapetalae</taxon>
        <taxon>asterids</taxon>
        <taxon>Ericales</taxon>
        <taxon>Actinidiaceae</taxon>
        <taxon>Actinidia</taxon>
    </lineage>
</organism>
<proteinExistence type="inferred from homology"/>
<keyword id="KW-0150">Chloroplast</keyword>
<keyword id="KW-0507">mRNA processing</keyword>
<keyword id="KW-0934">Plastid</keyword>
<keyword id="KW-0694">RNA-binding</keyword>
<keyword id="KW-0819">tRNA processing</keyword>
<reference key="1">
    <citation type="journal article" date="1997" name="Am. J. Bot.">
        <title>Phylogenetics relationships of Rhododendroideae (Ericaceae).</title>
        <authorList>
            <person name="Kron K.A."/>
        </authorList>
    </citation>
    <scope>NUCLEOTIDE SEQUENCE [GENOMIC DNA]</scope>
</reference>
<reference key="2">
    <citation type="journal article" date="2015" name="Taxon">
        <title>Molecular phylogenetics and floral evolution in the sarracenioid clade (Actinidiaceae, Roridulaceae and Sarraceniaceae) of Ericales.</title>
        <authorList>
            <person name="Loefstrand S.D."/>
            <person name="Schoenenberger J."/>
        </authorList>
    </citation>
    <scope>NUCLEOTIDE SEQUENCE [GENOMIC DNA]</scope>
</reference>
<reference key="3">
    <citation type="journal article" date="2015" name="PLoS ONE">
        <title>The first complete chloroplast genome sequences in Actinidiaceae: Genome structure and comparative analysis.</title>
        <authorList>
            <person name="Yao X."/>
            <person name="Tang P."/>
            <person name="Li Z."/>
            <person name="Li D."/>
            <person name="Liu Y."/>
            <person name="Huang H."/>
        </authorList>
    </citation>
    <scope>NUCLEOTIDE SEQUENCE [LARGE SCALE GENOMIC DNA]</scope>
</reference>
<sequence length="504" mass="59869">MKEFKRYLELDRSQQHDFVYPLLFQEYIYVLAHDHGLNRSILLENADYDNKFSLLIVKRLITQMDQQNHLIFSPNDSNQNPFLGHNTNLYSQMILEGFAVVVEIPFSLRLISSLEGKETVKSHKLRSIHSIFPFLEDKFSRLNYVLDILIPHSIHLEILVQTLRYWVKDASSLHLLRFFLHEYRNWNTRITPKKSSFSFSKRNQRFFLFLYNFHVCESESIFVFLRNQSSHLRSISSGTFLERIYFYGKIEHFVKVFTKDFQDILWLFKDPFMHYVRYQGNSILASKGTSLLMNKWKYYLVNFWQCYFYMWCQPGRIQINQLSNHSLDFLGYLSSVRLNPSMVRSQMLENSFLIGNAIKKFDTIVPIIPLIGSLYKAKFCNVLGHPVSKPVWADLSDSDIIDRFGRIYRNLSHYHSGSLKKTSLYRIKYILRLSCARTLARKHKSTVRAFLKRLGSELLEEFFTEEEQVFYLTFQKTYSTSQGLSRGRIWYLDIICINDLANHE</sequence>